<organism>
    <name type="scientific">Homo sapiens</name>
    <name type="common">Human</name>
    <dbReference type="NCBI Taxonomy" id="9606"/>
    <lineage>
        <taxon>Eukaryota</taxon>
        <taxon>Metazoa</taxon>
        <taxon>Chordata</taxon>
        <taxon>Craniata</taxon>
        <taxon>Vertebrata</taxon>
        <taxon>Euteleostomi</taxon>
        <taxon>Mammalia</taxon>
        <taxon>Eutheria</taxon>
        <taxon>Euarchontoglires</taxon>
        <taxon>Primates</taxon>
        <taxon>Haplorrhini</taxon>
        <taxon>Catarrhini</taxon>
        <taxon>Hominidae</taxon>
        <taxon>Homo</taxon>
    </lineage>
</organism>
<name>COF1_HUMAN</name>
<sequence length="166" mass="18502">MASGVAVSDGVIKVFNDMKVRKSSTPEEVKKRKKAVLFCLSEDKKNIILEEGKEILVGDVGQTVDDPYATFVKMLPDKDCRYALYDATYETKESKKEDLVFIFWAPESAPLKSKMIYASSKDAIKKKLTGIKHELQANCYEEVKDRCTLAEKLGGSAVISLEGKPL</sequence>
<gene>
    <name type="primary">CFL1</name>
    <name type="synonym">CFL</name>
</gene>
<keyword id="KW-0002">3D-structure</keyword>
<keyword id="KW-0007">Acetylation</keyword>
<keyword id="KW-0009">Actin-binding</keyword>
<keyword id="KW-1003">Cell membrane</keyword>
<keyword id="KW-0966">Cell projection</keyword>
<keyword id="KW-0963">Cytoplasm</keyword>
<keyword id="KW-0206">Cytoskeleton</keyword>
<keyword id="KW-0903">Direct protein sequencing</keyword>
<keyword id="KW-0945">Host-virus interaction</keyword>
<keyword id="KW-1017">Isopeptide bond</keyword>
<keyword id="KW-0472">Membrane</keyword>
<keyword id="KW-0539">Nucleus</keyword>
<keyword id="KW-0597">Phosphoprotein</keyword>
<keyword id="KW-1267">Proteomics identification</keyword>
<keyword id="KW-1185">Reference proteome</keyword>
<keyword id="KW-0832">Ubl conjugation</keyword>
<reference key="1">
    <citation type="journal article" date="1990" name="Nucleic Acids Res.">
        <title>Coding sequence of human placenta cofilin cDNA.</title>
        <authorList>
            <person name="Ogawa K."/>
            <person name="Tashima M."/>
            <person name="Yumoto Y."/>
            <person name="Okuda T."/>
            <person name="Sawada H."/>
            <person name="Okuma M."/>
            <person name="Maruyama Y."/>
        </authorList>
    </citation>
    <scope>NUCLEOTIDE SEQUENCE [MRNA]</scope>
    <source>
        <tissue>Placenta</tissue>
    </source>
</reference>
<reference key="2">
    <citation type="journal article" date="1995" name="Eur. J. Hum. Genet.">
        <title>A provisional transcript map of the spinal muscular atrophy (SMA) critical region.</title>
        <authorList>
            <person name="van der Steege G."/>
            <person name="Draaijers T.G."/>
            <person name="Grootscholten P.M."/>
            <person name="Osinga J."/>
            <person name="Anzevino R."/>
            <person name="Velona I."/>
            <person name="Den Dunnen J.T."/>
            <person name="Scheffer H."/>
            <person name="Brahe C."/>
            <person name="van Ommen G.J.B."/>
            <person name="Buys C.H.C.M."/>
        </authorList>
    </citation>
    <scope>NUCLEOTIDE SEQUENCE [MRNA]</scope>
    <source>
        <tissue>Pre-B cell</tissue>
    </source>
</reference>
<reference key="3">
    <citation type="journal article" date="1996" name="Ann. Hum. Genet.">
        <title>Mapping of human non-muscle type cofilin (CFL1) to chromosome 11q13 and muscle-type cofilin (CFL2) to chromosome 14.</title>
        <authorList>
            <person name="Gillett G.T."/>
            <person name="Fox M.F."/>
            <person name="Rowe P.S.N."/>
            <person name="Casimir C.M."/>
            <person name="Povey S."/>
        </authorList>
    </citation>
    <scope>NUCLEOTIDE SEQUENCE [MRNA]</scope>
</reference>
<reference key="4">
    <citation type="submission" date="2003-05" db="EMBL/GenBank/DDBJ databases">
        <title>Cloning of human full-length CDSs in BD Creator(TM) system donor vector.</title>
        <authorList>
            <person name="Kalnine N."/>
            <person name="Chen X."/>
            <person name="Rolfs A."/>
            <person name="Halleck A."/>
            <person name="Hines L."/>
            <person name="Eisenstein S."/>
            <person name="Koundinya M."/>
            <person name="Raphael J."/>
            <person name="Moreira D."/>
            <person name="Kelley T."/>
            <person name="LaBaer J."/>
            <person name="Lin Y."/>
            <person name="Phelan M."/>
            <person name="Farmer A."/>
        </authorList>
    </citation>
    <scope>NUCLEOTIDE SEQUENCE [LARGE SCALE MRNA]</scope>
</reference>
<reference key="5">
    <citation type="journal article" date="2004" name="Nat. Genet.">
        <title>Complete sequencing and characterization of 21,243 full-length human cDNAs.</title>
        <authorList>
            <person name="Ota T."/>
            <person name="Suzuki Y."/>
            <person name="Nishikawa T."/>
            <person name="Otsuki T."/>
            <person name="Sugiyama T."/>
            <person name="Irie R."/>
            <person name="Wakamatsu A."/>
            <person name="Hayashi K."/>
            <person name="Sato H."/>
            <person name="Nagai K."/>
            <person name="Kimura K."/>
            <person name="Makita H."/>
            <person name="Sekine M."/>
            <person name="Obayashi M."/>
            <person name="Nishi T."/>
            <person name="Shibahara T."/>
            <person name="Tanaka T."/>
            <person name="Ishii S."/>
            <person name="Yamamoto J."/>
            <person name="Saito K."/>
            <person name="Kawai Y."/>
            <person name="Isono Y."/>
            <person name="Nakamura Y."/>
            <person name="Nagahari K."/>
            <person name="Murakami K."/>
            <person name="Yasuda T."/>
            <person name="Iwayanagi T."/>
            <person name="Wagatsuma M."/>
            <person name="Shiratori A."/>
            <person name="Sudo H."/>
            <person name="Hosoiri T."/>
            <person name="Kaku Y."/>
            <person name="Kodaira H."/>
            <person name="Kondo H."/>
            <person name="Sugawara M."/>
            <person name="Takahashi M."/>
            <person name="Kanda K."/>
            <person name="Yokoi T."/>
            <person name="Furuya T."/>
            <person name="Kikkawa E."/>
            <person name="Omura Y."/>
            <person name="Abe K."/>
            <person name="Kamihara K."/>
            <person name="Katsuta N."/>
            <person name="Sato K."/>
            <person name="Tanikawa M."/>
            <person name="Yamazaki M."/>
            <person name="Ninomiya K."/>
            <person name="Ishibashi T."/>
            <person name="Yamashita H."/>
            <person name="Murakawa K."/>
            <person name="Fujimori K."/>
            <person name="Tanai H."/>
            <person name="Kimata M."/>
            <person name="Watanabe M."/>
            <person name="Hiraoka S."/>
            <person name="Chiba Y."/>
            <person name="Ishida S."/>
            <person name="Ono Y."/>
            <person name="Takiguchi S."/>
            <person name="Watanabe S."/>
            <person name="Yosida M."/>
            <person name="Hotuta T."/>
            <person name="Kusano J."/>
            <person name="Kanehori K."/>
            <person name="Takahashi-Fujii A."/>
            <person name="Hara H."/>
            <person name="Tanase T.-O."/>
            <person name="Nomura Y."/>
            <person name="Togiya S."/>
            <person name="Komai F."/>
            <person name="Hara R."/>
            <person name="Takeuchi K."/>
            <person name="Arita M."/>
            <person name="Imose N."/>
            <person name="Musashino K."/>
            <person name="Yuuki H."/>
            <person name="Oshima A."/>
            <person name="Sasaki N."/>
            <person name="Aotsuka S."/>
            <person name="Yoshikawa Y."/>
            <person name="Matsunawa H."/>
            <person name="Ichihara T."/>
            <person name="Shiohata N."/>
            <person name="Sano S."/>
            <person name="Moriya S."/>
            <person name="Momiyama H."/>
            <person name="Satoh N."/>
            <person name="Takami S."/>
            <person name="Terashima Y."/>
            <person name="Suzuki O."/>
            <person name="Nakagawa S."/>
            <person name="Senoh A."/>
            <person name="Mizoguchi H."/>
            <person name="Goto Y."/>
            <person name="Shimizu F."/>
            <person name="Wakebe H."/>
            <person name="Hishigaki H."/>
            <person name="Watanabe T."/>
            <person name="Sugiyama A."/>
            <person name="Takemoto M."/>
            <person name="Kawakami B."/>
            <person name="Yamazaki M."/>
            <person name="Watanabe K."/>
            <person name="Kumagai A."/>
            <person name="Itakura S."/>
            <person name="Fukuzumi Y."/>
            <person name="Fujimori Y."/>
            <person name="Komiyama M."/>
            <person name="Tashiro H."/>
            <person name="Tanigami A."/>
            <person name="Fujiwara T."/>
            <person name="Ono T."/>
            <person name="Yamada K."/>
            <person name="Fujii Y."/>
            <person name="Ozaki K."/>
            <person name="Hirao M."/>
            <person name="Ohmori Y."/>
            <person name="Kawabata A."/>
            <person name="Hikiji T."/>
            <person name="Kobatake N."/>
            <person name="Inagaki H."/>
            <person name="Ikema Y."/>
            <person name="Okamoto S."/>
            <person name="Okitani R."/>
            <person name="Kawakami T."/>
            <person name="Noguchi S."/>
            <person name="Itoh T."/>
            <person name="Shigeta K."/>
            <person name="Senba T."/>
            <person name="Matsumura K."/>
            <person name="Nakajima Y."/>
            <person name="Mizuno T."/>
            <person name="Morinaga M."/>
            <person name="Sasaki M."/>
            <person name="Togashi T."/>
            <person name="Oyama M."/>
            <person name="Hata H."/>
            <person name="Watanabe M."/>
            <person name="Komatsu T."/>
            <person name="Mizushima-Sugano J."/>
            <person name="Satoh T."/>
            <person name="Shirai Y."/>
            <person name="Takahashi Y."/>
            <person name="Nakagawa K."/>
            <person name="Okumura K."/>
            <person name="Nagase T."/>
            <person name="Nomura N."/>
            <person name="Kikuchi H."/>
            <person name="Masuho Y."/>
            <person name="Yamashita R."/>
            <person name="Nakai K."/>
            <person name="Yada T."/>
            <person name="Nakamura Y."/>
            <person name="Ohara O."/>
            <person name="Isogai T."/>
            <person name="Sugano S."/>
        </authorList>
    </citation>
    <scope>NUCLEOTIDE SEQUENCE [LARGE SCALE MRNA]</scope>
    <source>
        <tissue>Testis</tissue>
    </source>
</reference>
<reference key="6">
    <citation type="submission" date="2005-07" db="EMBL/GenBank/DDBJ databases">
        <authorList>
            <person name="Mural R.J."/>
            <person name="Istrail S."/>
            <person name="Sutton G.G."/>
            <person name="Florea L."/>
            <person name="Halpern A.L."/>
            <person name="Mobarry C.M."/>
            <person name="Lippert R."/>
            <person name="Walenz B."/>
            <person name="Shatkay H."/>
            <person name="Dew I."/>
            <person name="Miller J.R."/>
            <person name="Flanigan M.J."/>
            <person name="Edwards N.J."/>
            <person name="Bolanos R."/>
            <person name="Fasulo D."/>
            <person name="Halldorsson B.V."/>
            <person name="Hannenhalli S."/>
            <person name="Turner R."/>
            <person name="Yooseph S."/>
            <person name="Lu F."/>
            <person name="Nusskern D.R."/>
            <person name="Shue B.C."/>
            <person name="Zheng X.H."/>
            <person name="Zhong F."/>
            <person name="Delcher A.L."/>
            <person name="Huson D.H."/>
            <person name="Kravitz S.A."/>
            <person name="Mouchard L."/>
            <person name="Reinert K."/>
            <person name="Remington K.A."/>
            <person name="Clark A.G."/>
            <person name="Waterman M.S."/>
            <person name="Eichler E.E."/>
            <person name="Adams M.D."/>
            <person name="Hunkapiller M.W."/>
            <person name="Myers E.W."/>
            <person name="Venter J.C."/>
        </authorList>
    </citation>
    <scope>NUCLEOTIDE SEQUENCE [LARGE SCALE GENOMIC DNA]</scope>
</reference>
<reference key="7">
    <citation type="journal article" date="2004" name="Genome Res.">
        <title>The status, quality, and expansion of the NIH full-length cDNA project: the Mammalian Gene Collection (MGC).</title>
        <authorList>
            <consortium name="The MGC Project Team"/>
        </authorList>
    </citation>
    <scope>NUCLEOTIDE SEQUENCE [LARGE SCALE MRNA]</scope>
    <source>
        <tissue>Lung</tissue>
        <tissue>Ovary</tissue>
        <tissue>Placenta</tissue>
        <tissue>Uterus</tissue>
    </source>
</reference>
<reference key="8">
    <citation type="journal article" date="2003" name="Nat. Biotechnol.">
        <title>Exploring proteomes and analyzing protein processing by mass spectrometric identification of sorted N-terminal peptides.</title>
        <authorList>
            <person name="Gevaert K."/>
            <person name="Goethals M."/>
            <person name="Martens L."/>
            <person name="Van Damme J."/>
            <person name="Staes A."/>
            <person name="Thomas G.R."/>
            <person name="Vandekerckhove J."/>
        </authorList>
    </citation>
    <scope>PROTEIN SEQUENCE OF 2-21</scope>
    <source>
        <tissue>Platelet</tissue>
    </source>
</reference>
<reference key="9">
    <citation type="submission" date="2005-03" db="UniProtKB">
        <authorList>
            <person name="Quadroni M."/>
            <person name="Bienvenut W.V."/>
        </authorList>
    </citation>
    <scope>PROTEIN SEQUENCE OF 2-13 AND 54-73</scope>
    <scope>CLEAVAGE OF INITIATOR METHIONINE</scope>
    <scope>ACETYLATION AT ALA-2</scope>
    <scope>IDENTIFICATION BY MASS SPECTROMETRY</scope>
    <source>
        <tissue>B-cell lymphoma</tissue>
    </source>
</reference>
<reference key="10">
    <citation type="submission" date="2008-12" db="UniProtKB">
        <authorList>
            <person name="Lubec G."/>
            <person name="Vishwanath V."/>
            <person name="Chen W.-Q."/>
            <person name="Sun Y."/>
        </authorList>
    </citation>
    <scope>PROTEIN SEQUENCE OF 34-45; 54-73; 82-92; 96-112; 133-146 AND 153-166</scope>
    <scope>IDENTIFICATION BY MASS SPECTROMETRY</scope>
    <source>
        <tissue>Brain</tissue>
        <tissue>Cajal-Retzius cell</tissue>
        <tissue>Fetal brain cortex</tissue>
    </source>
</reference>
<reference key="11">
    <citation type="journal article" date="1994" name="Biochem. J.">
        <title>Dephosphorylation of cofilin in stimulated platelets: roles for a GTP-binding protein and Ca2+.</title>
        <authorList>
            <person name="Davidson M.M."/>
            <person name="Haslam R.J."/>
        </authorList>
    </citation>
    <scope>PROTEIN SEQUENCE OF 52-71</scope>
    <source>
        <tissue>Platelet</tissue>
    </source>
</reference>
<reference key="12">
    <citation type="journal article" date="2002" name="J. Mol. Biol.">
        <title>Determining the differences in actin binding by human ADF and cofilin.</title>
        <authorList>
            <person name="Yeoh S."/>
            <person name="Pope B."/>
            <person name="Mannherz H.G."/>
            <person name="Weeds A."/>
        </authorList>
    </citation>
    <scope>FUNCTION</scope>
    <scope>ACTIN BINDING</scope>
</reference>
<reference key="13">
    <citation type="journal article" date="2003" name="Exp. Cell Res.">
        <title>Cofilin phosphorylation and actin polymerization by NRK/NESK, a member of the germinal center kinase family.</title>
        <authorList>
            <person name="Nakano K."/>
            <person name="Kanai-Azuma M."/>
            <person name="Kanai Y."/>
            <person name="Moriyama K."/>
            <person name="Yazaki K."/>
            <person name="Hayashi Y."/>
            <person name="Kitamura N."/>
        </authorList>
    </citation>
    <scope>PHOSPHORYLATION AT SER-3 BY NRK</scope>
</reference>
<reference key="14">
    <citation type="journal article" date="2003" name="Nature">
        <title>Proteomic characterization of the human centrosome by protein correlation profiling.</title>
        <authorList>
            <person name="Andersen J.S."/>
            <person name="Wilkinson C.J."/>
            <person name="Mayor T."/>
            <person name="Mortensen P."/>
            <person name="Nigg E.A."/>
            <person name="Mann M."/>
        </authorList>
    </citation>
    <scope>IDENTIFICATION BY MASS SPECTROMETRY</scope>
    <source>
        <tissue>Lymphoblast</tissue>
    </source>
</reference>
<reference key="15">
    <citation type="journal article" date="2005" name="Nat. Biotechnol.">
        <title>Immunoaffinity profiling of tyrosine phosphorylation in cancer cells.</title>
        <authorList>
            <person name="Rush J."/>
            <person name="Moritz A."/>
            <person name="Lee K.A."/>
            <person name="Guo A."/>
            <person name="Goss V.L."/>
            <person name="Spek E.J."/>
            <person name="Zhang H."/>
            <person name="Zha X.-M."/>
            <person name="Polakiewicz R.D."/>
            <person name="Comb M.J."/>
        </authorList>
    </citation>
    <scope>PHOSPHORYLATION [LARGE SCALE ANALYSIS] AT TYR-140</scope>
    <scope>IDENTIFICATION BY MASS SPECTROMETRY [LARGE SCALE ANALYSIS]</scope>
</reference>
<reference key="16">
    <citation type="journal article" date="2005" name="Nat. Cell Biol.">
        <title>Chronophin, a novel HAD-type serine protein phosphatase, regulates cofilin-dependent actin dynamics.</title>
        <authorList>
            <person name="Gohla A."/>
            <person name="Birkenfeld J."/>
            <person name="Bokoch G.M."/>
        </authorList>
    </citation>
    <scope>FUNCTION</scope>
    <scope>SUBCELLULAR LOCATION</scope>
    <scope>DEPHOSPHORYLATION BY PDXP</scope>
</reference>
<reference key="17">
    <citation type="journal article" date="2006" name="Cell">
        <title>Global, in vivo, and site-specific phosphorylation dynamics in signaling networks.</title>
        <authorList>
            <person name="Olsen J.V."/>
            <person name="Blagoev B."/>
            <person name="Gnad F."/>
            <person name="Macek B."/>
            <person name="Kumar C."/>
            <person name="Mortensen P."/>
            <person name="Mann M."/>
        </authorList>
    </citation>
    <scope>PHOSPHORYLATION [LARGE SCALE ANALYSIS] AT SER-3</scope>
    <scope>IDENTIFICATION BY MASS SPECTROMETRY [LARGE SCALE ANALYSIS]</scope>
    <source>
        <tissue>Cervix carcinoma</tissue>
    </source>
</reference>
<reference key="18">
    <citation type="journal article" date="2006" name="Cell. Microbiol.">
        <title>Transcriptomic and proteomic analyses of rhabdomyosarcoma cells reveal differential cellular gene expression in response to enterovirus 71 infection.</title>
        <authorList>
            <person name="Leong W.F."/>
            <person name="Chow V.T."/>
        </authorList>
    </citation>
    <scope>INDUCTION BY EV71 INFECTION</scope>
    <scope>IDENTIFICATION BY MASS SPECTROMETRY</scope>
</reference>
<reference key="19">
    <citation type="journal article" date="2008" name="Proc. Natl. Acad. Sci. U.S.A.">
        <title>A quantitative atlas of mitotic phosphorylation.</title>
        <authorList>
            <person name="Dephoure N."/>
            <person name="Zhou C."/>
            <person name="Villen J."/>
            <person name="Beausoleil S.A."/>
            <person name="Bakalarski C.E."/>
            <person name="Elledge S.J."/>
            <person name="Gygi S.P."/>
        </authorList>
    </citation>
    <scope>PHOSPHORYLATION [LARGE SCALE ANALYSIS] AT SER-3 AND SER-156</scope>
    <scope>IDENTIFICATION BY MASS SPECTROMETRY [LARGE SCALE ANALYSIS]</scope>
    <source>
        <tissue>Cervix carcinoma</tissue>
    </source>
</reference>
<reference key="20">
    <citation type="journal article" date="2009" name="Anal. Chem.">
        <title>Lys-N and trypsin cover complementary parts of the phosphoproteome in a refined SCX-based approach.</title>
        <authorList>
            <person name="Gauci S."/>
            <person name="Helbig A.O."/>
            <person name="Slijper M."/>
            <person name="Krijgsveld J."/>
            <person name="Heck A.J."/>
            <person name="Mohammed S."/>
        </authorList>
    </citation>
    <scope>ACETYLATION [LARGE SCALE ANALYSIS] AT ALA-2</scope>
    <scope>CLEAVAGE OF INITIATOR METHIONINE [LARGE SCALE ANALYSIS]</scope>
    <scope>IDENTIFICATION BY MASS SPECTROMETRY [LARGE SCALE ANALYSIS]</scope>
</reference>
<reference key="21">
    <citation type="journal article" date="2009" name="Mol. Cell. Proteomics">
        <title>Large-scale proteomics analysis of the human kinome.</title>
        <authorList>
            <person name="Oppermann F.S."/>
            <person name="Gnad F."/>
            <person name="Olsen J.V."/>
            <person name="Hornberger R."/>
            <person name="Greff Z."/>
            <person name="Keri G."/>
            <person name="Mann M."/>
            <person name="Daub H."/>
        </authorList>
    </citation>
    <scope>ACETYLATION [LARGE SCALE ANALYSIS] AT ALA-2</scope>
    <scope>PHOSPHORYLATION [LARGE SCALE ANALYSIS] AT SER-3</scope>
    <scope>CLEAVAGE OF INITIATOR METHIONINE [LARGE SCALE ANALYSIS]</scope>
    <scope>IDENTIFICATION BY MASS SPECTROMETRY [LARGE SCALE ANALYSIS]</scope>
</reference>
<reference key="22">
    <citation type="journal article" date="2009" name="Sci. Signal.">
        <title>Quantitative phosphoproteomic analysis of T cell receptor signaling reveals system-wide modulation of protein-protein interactions.</title>
        <authorList>
            <person name="Mayya V."/>
            <person name="Lundgren D.H."/>
            <person name="Hwang S.-I."/>
            <person name="Rezaul K."/>
            <person name="Wu L."/>
            <person name="Eng J.K."/>
            <person name="Rodionov V."/>
            <person name="Han D.K."/>
        </authorList>
    </citation>
    <scope>PHOSPHORYLATION [LARGE SCALE ANALYSIS] AT TYR-68 AND SER-156</scope>
    <scope>IDENTIFICATION BY MASS SPECTROMETRY [LARGE SCALE ANALYSIS]</scope>
    <source>
        <tissue>Leukemic T-cell</tissue>
    </source>
</reference>
<reference key="23">
    <citation type="journal article" date="2009" name="Science">
        <title>Lysine acetylation targets protein complexes and co-regulates major cellular functions.</title>
        <authorList>
            <person name="Choudhary C."/>
            <person name="Kumar C."/>
            <person name="Gnad F."/>
            <person name="Nielsen M.L."/>
            <person name="Rehman M."/>
            <person name="Walther T.C."/>
            <person name="Olsen J.V."/>
            <person name="Mann M."/>
        </authorList>
    </citation>
    <scope>ACETYLATION [LARGE SCALE ANALYSIS] AT LYS-13; LYS-73 AND LYS-144</scope>
    <scope>IDENTIFICATION BY MASS SPECTROMETRY [LARGE SCALE ANALYSIS]</scope>
</reference>
<reference key="24">
    <citation type="journal article" date="2010" name="Sci. Signal.">
        <title>Quantitative phosphoproteomics reveals widespread full phosphorylation site occupancy during mitosis.</title>
        <authorList>
            <person name="Olsen J.V."/>
            <person name="Vermeulen M."/>
            <person name="Santamaria A."/>
            <person name="Kumar C."/>
            <person name="Miller M.L."/>
            <person name="Jensen L.J."/>
            <person name="Gnad F."/>
            <person name="Cox J."/>
            <person name="Jensen T.S."/>
            <person name="Nigg E.A."/>
            <person name="Brunak S."/>
            <person name="Mann M."/>
        </authorList>
    </citation>
    <scope>ACETYLATION [LARGE SCALE ANALYSIS] AT ALA-2</scope>
    <scope>PHOSPHORYLATION [LARGE SCALE ANALYSIS] AT SER-3; THR-25 AND SER-156</scope>
    <scope>CLEAVAGE OF INITIATOR METHIONINE [LARGE SCALE ANALYSIS]</scope>
    <scope>IDENTIFICATION BY MASS SPECTROMETRY [LARGE SCALE ANALYSIS]</scope>
    <source>
        <tissue>Cervix carcinoma</tissue>
    </source>
</reference>
<reference key="25">
    <citation type="journal article" date="2011" name="BMC Biol.">
        <title>Identification and characterization of a set of conserved and new regulators of cytoskeletal organisation, cell morphology and migration.</title>
        <authorList>
            <person name="Bai S.W."/>
            <person name="Herrera-Abreu M.T."/>
            <person name="Rohn J.L."/>
            <person name="Racine V."/>
            <person name="Tajadura V."/>
            <person name="Suryavanshi N."/>
            <person name="Bechtel S."/>
            <person name="Wiemann S."/>
            <person name="Baum B."/>
            <person name="Ridley A.J."/>
        </authorList>
    </citation>
    <scope>FUNCTION</scope>
</reference>
<reference key="26">
    <citation type="journal article" date="2011" name="BMC Syst. Biol.">
        <title>Initial characterization of the human central proteome.</title>
        <authorList>
            <person name="Burkard T.R."/>
            <person name="Planyavsky M."/>
            <person name="Kaupe I."/>
            <person name="Breitwieser F.P."/>
            <person name="Buerckstuemmer T."/>
            <person name="Bennett K.L."/>
            <person name="Superti-Furga G."/>
            <person name="Colinge J."/>
        </authorList>
    </citation>
    <scope>IDENTIFICATION BY MASS SPECTROMETRY [LARGE SCALE ANALYSIS]</scope>
</reference>
<reference key="27">
    <citation type="journal article" date="2011" name="Sci. Signal.">
        <title>System-wide temporal characterization of the proteome and phosphoproteome of human embryonic stem cell differentiation.</title>
        <authorList>
            <person name="Rigbolt K.T."/>
            <person name="Prokhorova T.A."/>
            <person name="Akimov V."/>
            <person name="Henningsen J."/>
            <person name="Johansen P.T."/>
            <person name="Kratchmarova I."/>
            <person name="Kassem M."/>
            <person name="Mann M."/>
            <person name="Olsen J.V."/>
            <person name="Blagoev B."/>
        </authorList>
    </citation>
    <scope>ACETYLATION [LARGE SCALE ANALYSIS] AT ALA-2</scope>
    <scope>PHOSPHORYLATION [LARGE SCALE ANALYSIS] AT SER-3</scope>
    <scope>CLEAVAGE OF INITIATOR METHIONINE [LARGE SCALE ANALYSIS]</scope>
    <scope>IDENTIFICATION BY MASS SPECTROMETRY [LARGE SCALE ANALYSIS]</scope>
</reference>
<reference key="28">
    <citation type="journal article" date="2012" name="Mol. Cell. Proteomics">
        <title>Comparative large-scale characterisation of plant vs. mammal proteins reveals similar and idiosyncratic N-alpha acetylation features.</title>
        <authorList>
            <person name="Bienvenut W.V."/>
            <person name="Sumpton D."/>
            <person name="Martinez A."/>
            <person name="Lilla S."/>
            <person name="Espagne C."/>
            <person name="Meinnel T."/>
            <person name="Giglione C."/>
        </authorList>
    </citation>
    <scope>ACETYLATION [LARGE SCALE ANALYSIS] AT ALA-2</scope>
    <scope>CLEAVAGE OF INITIATOR METHIONINE [LARGE SCALE ANALYSIS]</scope>
    <scope>IDENTIFICATION BY MASS SPECTROMETRY [LARGE SCALE ANALYSIS]</scope>
</reference>
<reference key="29">
    <citation type="journal article" date="2012" name="Proc. Natl. Acad. Sci. U.S.A.">
        <title>N-terminal acetylome analyses and functional insights of the N-terminal acetyltransferase NatB.</title>
        <authorList>
            <person name="Van Damme P."/>
            <person name="Lasa M."/>
            <person name="Polevoda B."/>
            <person name="Gazquez C."/>
            <person name="Elosegui-Artola A."/>
            <person name="Kim D.S."/>
            <person name="De Juan-Pardo E."/>
            <person name="Demeyer K."/>
            <person name="Hole K."/>
            <person name="Larrea E."/>
            <person name="Timmerman E."/>
            <person name="Prieto J."/>
            <person name="Arnesen T."/>
            <person name="Sherman F."/>
            <person name="Gevaert K."/>
            <person name="Aldabe R."/>
        </authorList>
    </citation>
    <scope>ACETYLATION [LARGE SCALE ANALYSIS] AT ALA-2</scope>
    <scope>CLEAVAGE OF INITIATOR METHIONINE [LARGE SCALE ANALYSIS]</scope>
    <scope>IDENTIFICATION BY MASS SPECTROMETRY [LARGE SCALE ANALYSIS]</scope>
</reference>
<reference key="30">
    <citation type="journal article" date="2013" name="J. Proteome Res.">
        <title>Toward a comprehensive characterization of a human cancer cell phosphoproteome.</title>
        <authorList>
            <person name="Zhou H."/>
            <person name="Di Palma S."/>
            <person name="Preisinger C."/>
            <person name="Peng M."/>
            <person name="Polat A.N."/>
            <person name="Heck A.J."/>
            <person name="Mohammed S."/>
        </authorList>
    </citation>
    <scope>PHOSPHORYLATION [LARGE SCALE ANALYSIS] AT SER-3; SER-41 AND SER-156</scope>
    <scope>IDENTIFICATION BY MASS SPECTROMETRY [LARGE SCALE ANALYSIS]</scope>
    <source>
        <tissue>Cervix carcinoma</tissue>
        <tissue>Erythroleukemia</tissue>
    </source>
</reference>
<reference key="31">
    <citation type="journal article" date="2013" name="Sci. Signal.">
        <title>Beta-arrestin-dependent activation of the cofilin pathway is required for the scavenging activity of the atypical chemokine receptor D6.</title>
        <authorList>
            <person name="Borroni E.M."/>
            <person name="Cancellieri C."/>
            <person name="Vacchini A."/>
            <person name="Benureau Y."/>
            <person name="Lagane B."/>
            <person name="Bachelerie F."/>
            <person name="Arenzana-Seisdedos F."/>
            <person name="Mizuno K."/>
            <person name="Mantovani A."/>
            <person name="Bonecchi R."/>
            <person name="Locati M."/>
        </authorList>
    </citation>
    <scope>FUNCTION</scope>
    <scope>PHOSPHORYLATION</scope>
</reference>
<reference key="32">
    <citation type="journal article" date="2014" name="J. Proteomics">
        <title>An enzyme assisted RP-RPLC approach for in-depth analysis of human liver phosphoproteome.</title>
        <authorList>
            <person name="Bian Y."/>
            <person name="Song C."/>
            <person name="Cheng K."/>
            <person name="Dong M."/>
            <person name="Wang F."/>
            <person name="Huang J."/>
            <person name="Sun D."/>
            <person name="Wang L."/>
            <person name="Ye M."/>
            <person name="Zou H."/>
        </authorList>
    </citation>
    <scope>IDENTIFICATION BY MASS SPECTROMETRY [LARGE SCALE ANALYSIS]</scope>
    <source>
        <tissue>Liver</tissue>
    </source>
</reference>
<reference key="33">
    <citation type="journal article" date="2015" name="Proteomics">
        <title>N-terminome analysis of the human mitochondrial proteome.</title>
        <authorList>
            <person name="Vaca Jacome A.S."/>
            <person name="Rabilloud T."/>
            <person name="Schaeffer-Reiss C."/>
            <person name="Rompais M."/>
            <person name="Ayoub D."/>
            <person name="Lane L."/>
            <person name="Bairoch A."/>
            <person name="Van Dorsselaer A."/>
            <person name="Carapito C."/>
        </authorList>
    </citation>
    <scope>ACETYLATION [LARGE SCALE ANALYSIS] AT ALA-2</scope>
    <scope>CLEAVAGE OF INITIATOR METHIONINE [LARGE SCALE ANALYSIS]</scope>
    <scope>IDENTIFICATION BY MASS SPECTROMETRY [LARGE SCALE ANALYSIS]</scope>
</reference>
<reference key="34">
    <citation type="journal article" date="2015" name="Mol. Cell. Proteomics">
        <title>New host factors important for respiratory syncytial virus (RSV) replication revealed by a novel microfluidics screen for interactors of matrix (M) protein.</title>
        <authorList>
            <person name="Kipper S."/>
            <person name="Hamad S."/>
            <person name="Caly L."/>
            <person name="Avrahami D."/>
            <person name="Bacharach E."/>
            <person name="Jans D.A."/>
            <person name="Gerber D."/>
            <person name="Bajorek M."/>
        </authorList>
    </citation>
    <scope>INTERACTION WITH HRSV MATRIX PROTEIN (MICROBIAL INFECTION)</scope>
</reference>
<reference key="35">
    <citation type="journal article" date="2017" name="Nat. Struct. Mol. Biol.">
        <title>Site-specific mapping of the human SUMO proteome reveals co-modification with phosphorylation.</title>
        <authorList>
            <person name="Hendriks I.A."/>
            <person name="Lyon D."/>
            <person name="Young C."/>
            <person name="Jensen L.J."/>
            <person name="Vertegaal A.C."/>
            <person name="Nielsen M.L."/>
        </authorList>
    </citation>
    <scope>SUMOYLATION [LARGE SCALE ANALYSIS] AT LYS-132</scope>
    <scope>IDENTIFICATION BY MASS SPECTROMETRY [LARGE SCALE ANALYSIS]</scope>
</reference>
<reference key="36">
    <citation type="journal article" date="2018" name="PLoS ONE">
        <title>A quantitative proteomic analysis of cofilin phosphorylation in myeloid cells and its modulation using the LIM kinase inhibitor Pyr1.</title>
        <authorList>
            <person name="Prudent R."/>
            <person name="Demoncheaux N."/>
            <person name="Diemer H."/>
            <person name="Collin-Faure V."/>
            <person name="Kapur R."/>
            <person name="Paublant F."/>
            <person name="Lafanechere L."/>
            <person name="Cianferani S."/>
            <person name="Rabilloud T."/>
        </authorList>
    </citation>
    <scope>PHOSPHORYLATION AT SER-3; THR-63; TYR-82; SER-108 AND SER-156</scope>
    <scope>ACETYLATION AT ALA-2</scope>
    <scope>IDENTIFICATION BY MASS SPECTROMETRY</scope>
</reference>
<reference key="37">
    <citation type="journal article" date="2004" name="J. Biol. Chem.">
        <title>Solution structure of human cofilin: actin binding, pH sensitivity, and relationship to actin-depolymerizing factor.</title>
        <authorList>
            <person name="Pope B.J."/>
            <person name="Zierler-Gould K.M."/>
            <person name="Kuhne R."/>
            <person name="Weeds A.G."/>
            <person name="Ball L.J."/>
        </authorList>
    </citation>
    <scope>STRUCTURE BY NMR</scope>
</reference>
<proteinExistence type="evidence at protein level"/>
<dbReference type="EMBL" id="D00682">
    <property type="protein sequence ID" value="BAA00589.1"/>
    <property type="molecule type" value="mRNA"/>
</dbReference>
<dbReference type="EMBL" id="U21909">
    <property type="protein sequence ID" value="AAA64501.1"/>
    <property type="molecule type" value="mRNA"/>
</dbReference>
<dbReference type="EMBL" id="X95404">
    <property type="protein sequence ID" value="CAA64685.1"/>
    <property type="molecule type" value="mRNA"/>
</dbReference>
<dbReference type="EMBL" id="BT006846">
    <property type="protein sequence ID" value="AAP35492.1"/>
    <property type="molecule type" value="mRNA"/>
</dbReference>
<dbReference type="EMBL" id="AK097690">
    <property type="protein sequence ID" value="BAG53513.1"/>
    <property type="molecule type" value="mRNA"/>
</dbReference>
<dbReference type="EMBL" id="CH471076">
    <property type="protein sequence ID" value="EAW74449.1"/>
    <property type="molecule type" value="Genomic_DNA"/>
</dbReference>
<dbReference type="EMBL" id="BC011005">
    <property type="protein sequence ID" value="AAH11005.1"/>
    <property type="molecule type" value="mRNA"/>
</dbReference>
<dbReference type="EMBL" id="BC012265">
    <property type="protein sequence ID" value="AAH12265.1"/>
    <property type="molecule type" value="mRNA"/>
</dbReference>
<dbReference type="EMBL" id="BC012318">
    <property type="protein sequence ID" value="AAH12318.1"/>
    <property type="molecule type" value="mRNA"/>
</dbReference>
<dbReference type="EMBL" id="BC018256">
    <property type="protein sequence ID" value="AAH18256.1"/>
    <property type="molecule type" value="mRNA"/>
</dbReference>
<dbReference type="CCDS" id="CCDS8114.1"/>
<dbReference type="PIR" id="S12632">
    <property type="entry name" value="S12632"/>
</dbReference>
<dbReference type="RefSeq" id="NP_005498.1">
    <property type="nucleotide sequence ID" value="NM_005507.3"/>
</dbReference>
<dbReference type="PDB" id="1Q8G">
    <property type="method" value="NMR"/>
    <property type="chains" value="A=1-166"/>
</dbReference>
<dbReference type="PDB" id="1Q8X">
    <property type="method" value="NMR"/>
    <property type="chains" value="A=1-166"/>
</dbReference>
<dbReference type="PDB" id="3J0S">
    <property type="method" value="EM"/>
    <property type="resolution" value="9.00 A"/>
    <property type="chains" value="M/N/O/P/Q/R/S/T/U/V/W/X=1-166"/>
</dbReference>
<dbReference type="PDB" id="4BEX">
    <property type="method" value="X-ray"/>
    <property type="resolution" value="2.80 A"/>
    <property type="chains" value="1=1-166"/>
</dbReference>
<dbReference type="PDB" id="5HVK">
    <property type="method" value="X-ray"/>
    <property type="resolution" value="3.50 A"/>
    <property type="chains" value="B/D=2-166"/>
</dbReference>
<dbReference type="PDB" id="5L6W">
    <property type="method" value="X-ray"/>
    <property type="resolution" value="2.53 A"/>
    <property type="chains" value="C=1-166"/>
</dbReference>
<dbReference type="PDB" id="6UBY">
    <property type="method" value="EM"/>
    <property type="resolution" value="7.50 A"/>
    <property type="chains" value="I=1-166"/>
</dbReference>
<dbReference type="PDB" id="6UC0">
    <property type="method" value="EM"/>
    <property type="resolution" value="7.50 A"/>
    <property type="chains" value="I=1-166"/>
</dbReference>
<dbReference type="PDB" id="6UC4">
    <property type="method" value="EM"/>
    <property type="resolution" value="9.20 A"/>
    <property type="chains" value="I/M/N/O/P=1-166"/>
</dbReference>
<dbReference type="PDB" id="6VAO">
    <property type="method" value="EM"/>
    <property type="resolution" value="3.40 A"/>
    <property type="chains" value="F/G/H/I/J=1-166"/>
</dbReference>
<dbReference type="PDBsum" id="1Q8G"/>
<dbReference type="PDBsum" id="1Q8X"/>
<dbReference type="PDBsum" id="3J0S"/>
<dbReference type="PDBsum" id="4BEX"/>
<dbReference type="PDBsum" id="5HVK"/>
<dbReference type="PDBsum" id="5L6W"/>
<dbReference type="PDBsum" id="6UBY"/>
<dbReference type="PDBsum" id="6UC0"/>
<dbReference type="PDBsum" id="6UC4"/>
<dbReference type="PDBsum" id="6VAO"/>
<dbReference type="BMRB" id="P23528"/>
<dbReference type="EMDB" id="EMD-20711"/>
<dbReference type="EMDB" id="EMD-20721"/>
<dbReference type="EMDB" id="EMD-20724"/>
<dbReference type="EMDB" id="EMD-20726"/>
<dbReference type="EMDB" id="EMD-5354"/>
<dbReference type="SMR" id="P23528"/>
<dbReference type="BioGRID" id="107499">
    <property type="interactions" value="402"/>
</dbReference>
<dbReference type="CORUM" id="P23528"/>
<dbReference type="DIP" id="DIP-33000N"/>
<dbReference type="FunCoup" id="P23528">
    <property type="interactions" value="1609"/>
</dbReference>
<dbReference type="IntAct" id="P23528">
    <property type="interactions" value="151"/>
</dbReference>
<dbReference type="MINT" id="P23528"/>
<dbReference type="STRING" id="9606.ENSP00000432660"/>
<dbReference type="ChEMBL" id="CHEMBL1075129"/>
<dbReference type="DrugBank" id="DB11638">
    <property type="generic name" value="Artenimol"/>
</dbReference>
<dbReference type="DrugBank" id="DB09130">
    <property type="generic name" value="Copper"/>
</dbReference>
<dbReference type="DrugBank" id="DB04147">
    <property type="generic name" value="Dodecyldimethylamine N-oxide"/>
</dbReference>
<dbReference type="CarbonylDB" id="P23528"/>
<dbReference type="GlyGen" id="P23528">
    <property type="glycosylation" value="4 sites, 1 O-linked glycan (4 sites)"/>
</dbReference>
<dbReference type="iPTMnet" id="P23528"/>
<dbReference type="MetOSite" id="P23528"/>
<dbReference type="PhosphoSitePlus" id="P23528"/>
<dbReference type="SwissPalm" id="P23528"/>
<dbReference type="BioMuta" id="CFL1"/>
<dbReference type="DMDM" id="116848"/>
<dbReference type="OGP" id="P23528"/>
<dbReference type="REPRODUCTION-2DPAGE" id="IPI00012011"/>
<dbReference type="jPOST" id="P23528"/>
<dbReference type="MassIVE" id="P23528"/>
<dbReference type="PaxDb" id="9606-ENSP00000432660"/>
<dbReference type="PeptideAtlas" id="P23528"/>
<dbReference type="PRIDE" id="P23528"/>
<dbReference type="ProteomicsDB" id="54128"/>
<dbReference type="Pumba" id="P23528"/>
<dbReference type="TopDownProteomics" id="P23528"/>
<dbReference type="Antibodypedia" id="16010">
    <property type="antibodies" value="1057 antibodies from 42 providers"/>
</dbReference>
<dbReference type="DNASU" id="1072"/>
<dbReference type="Ensembl" id="ENST00000308162.10">
    <property type="protein sequence ID" value="ENSP00000309629.5"/>
    <property type="gene ID" value="ENSG00000172757.13"/>
</dbReference>
<dbReference type="Ensembl" id="ENST00000525451.6">
    <property type="protein sequence ID" value="ENSP00000432660.1"/>
    <property type="gene ID" value="ENSG00000172757.13"/>
</dbReference>
<dbReference type="GeneID" id="1072"/>
<dbReference type="KEGG" id="hsa:1072"/>
<dbReference type="MANE-Select" id="ENST00000308162.10">
    <property type="protein sequence ID" value="ENSP00000309629.5"/>
    <property type="RefSeq nucleotide sequence ID" value="NM_005507.3"/>
    <property type="RefSeq protein sequence ID" value="NP_005498.1"/>
</dbReference>
<dbReference type="AGR" id="HGNC:1874"/>
<dbReference type="CTD" id="1072"/>
<dbReference type="DisGeNET" id="1072"/>
<dbReference type="GeneCards" id="CFL1"/>
<dbReference type="HGNC" id="HGNC:1874">
    <property type="gene designation" value="CFL1"/>
</dbReference>
<dbReference type="HPA" id="ENSG00000172757">
    <property type="expression patterns" value="Low tissue specificity"/>
</dbReference>
<dbReference type="MIM" id="601442">
    <property type="type" value="gene"/>
</dbReference>
<dbReference type="neXtProt" id="NX_P23528"/>
<dbReference type="OpenTargets" id="ENSG00000172757"/>
<dbReference type="PharmGKB" id="PA26423"/>
<dbReference type="VEuPathDB" id="HostDB:ENSG00000172757"/>
<dbReference type="eggNOG" id="KOG1735">
    <property type="taxonomic scope" value="Eukaryota"/>
</dbReference>
<dbReference type="GeneTree" id="ENSGT00950000183000"/>
<dbReference type="InParanoid" id="P23528"/>
<dbReference type="OMA" id="WSMIYAT"/>
<dbReference type="OrthoDB" id="10249245at2759"/>
<dbReference type="PAN-GO" id="P23528">
    <property type="GO annotations" value="8 GO annotations based on evolutionary models"/>
</dbReference>
<dbReference type="PhylomeDB" id="P23528"/>
<dbReference type="TreeFam" id="TF328601"/>
<dbReference type="PathwayCommons" id="P23528"/>
<dbReference type="Reactome" id="R-HSA-114608">
    <property type="pathway name" value="Platelet degranulation"/>
</dbReference>
<dbReference type="Reactome" id="R-HSA-2029482">
    <property type="pathway name" value="Regulation of actin dynamics for phagocytic cup formation"/>
</dbReference>
<dbReference type="Reactome" id="R-HSA-3928662">
    <property type="pathway name" value="EPHB-mediated forward signaling"/>
</dbReference>
<dbReference type="Reactome" id="R-HSA-399954">
    <property type="pathway name" value="Sema3A PAK dependent Axon repulsion"/>
</dbReference>
<dbReference type="Reactome" id="R-HSA-5627117">
    <property type="pathway name" value="RHO GTPases Activate ROCKs"/>
</dbReference>
<dbReference type="Reactome" id="R-HSA-8950505">
    <property type="pathway name" value="Gene and protein expression by JAK-STAT signaling after Interleukin-12 stimulation"/>
</dbReference>
<dbReference type="SignaLink" id="P23528"/>
<dbReference type="SIGNOR" id="P23528"/>
<dbReference type="BioGRID-ORCS" id="1072">
    <property type="hits" value="429 hits in 1163 CRISPR screens"/>
</dbReference>
<dbReference type="CD-CODE" id="DEE660B4">
    <property type="entry name" value="Stress granule"/>
</dbReference>
<dbReference type="CD-CODE" id="FB4E32DD">
    <property type="entry name" value="Presynaptic clusters and postsynaptic densities"/>
</dbReference>
<dbReference type="ChiTaRS" id="CFL1">
    <property type="organism name" value="human"/>
</dbReference>
<dbReference type="EvolutionaryTrace" id="P23528"/>
<dbReference type="GeneWiki" id="Cofilin_1"/>
<dbReference type="GenomeRNAi" id="1072"/>
<dbReference type="Pharos" id="P23528">
    <property type="development level" value="Tbio"/>
</dbReference>
<dbReference type="PRO" id="PR:P23528"/>
<dbReference type="Proteomes" id="UP000005640">
    <property type="component" value="Chromosome 11"/>
</dbReference>
<dbReference type="RNAct" id="P23528">
    <property type="molecule type" value="protein"/>
</dbReference>
<dbReference type="Bgee" id="ENSG00000172757">
    <property type="expression patterns" value="Expressed in ileal mucosa and 218 other cell types or tissues"/>
</dbReference>
<dbReference type="ExpressionAtlas" id="P23528">
    <property type="expression patterns" value="baseline and differential"/>
</dbReference>
<dbReference type="GO" id="GO:0015629">
    <property type="term" value="C:actin cytoskeleton"/>
    <property type="evidence" value="ECO:0000318"/>
    <property type="project" value="GO_Central"/>
</dbReference>
<dbReference type="GO" id="GO:0005911">
    <property type="term" value="C:cell-cell junction"/>
    <property type="evidence" value="ECO:0007669"/>
    <property type="project" value="Ensembl"/>
</dbReference>
<dbReference type="GO" id="GO:0090732">
    <property type="term" value="C:cofilin-actin rod"/>
    <property type="evidence" value="ECO:0007669"/>
    <property type="project" value="Ensembl"/>
</dbReference>
<dbReference type="GO" id="GO:0030864">
    <property type="term" value="C:cortical actin cytoskeleton"/>
    <property type="evidence" value="ECO:0007669"/>
    <property type="project" value="Ensembl"/>
</dbReference>
<dbReference type="GO" id="GO:0005737">
    <property type="term" value="C:cytoplasm"/>
    <property type="evidence" value="ECO:0000314"/>
    <property type="project" value="AgBase"/>
</dbReference>
<dbReference type="GO" id="GO:0005829">
    <property type="term" value="C:cytosol"/>
    <property type="evidence" value="ECO:0000304"/>
    <property type="project" value="Reactome"/>
</dbReference>
<dbReference type="GO" id="GO:0043197">
    <property type="term" value="C:dendritic spine"/>
    <property type="evidence" value="ECO:0007669"/>
    <property type="project" value="Ensembl"/>
</dbReference>
<dbReference type="GO" id="GO:0070062">
    <property type="term" value="C:extracellular exosome"/>
    <property type="evidence" value="ECO:0007005"/>
    <property type="project" value="UniProtKB"/>
</dbReference>
<dbReference type="GO" id="GO:0005615">
    <property type="term" value="C:extracellular space"/>
    <property type="evidence" value="ECO:0007005"/>
    <property type="project" value="UniProtKB"/>
</dbReference>
<dbReference type="GO" id="GO:0030175">
    <property type="term" value="C:filopodium"/>
    <property type="evidence" value="ECO:0007669"/>
    <property type="project" value="Ensembl"/>
</dbReference>
<dbReference type="GO" id="GO:0005925">
    <property type="term" value="C:focal adhesion"/>
    <property type="evidence" value="ECO:0000314"/>
    <property type="project" value="MGI"/>
</dbReference>
<dbReference type="GO" id="GO:0098978">
    <property type="term" value="C:glutamatergic synapse"/>
    <property type="evidence" value="ECO:0007669"/>
    <property type="project" value="Ensembl"/>
</dbReference>
<dbReference type="GO" id="GO:0030426">
    <property type="term" value="C:growth cone"/>
    <property type="evidence" value="ECO:0007669"/>
    <property type="project" value="UniProtKB-SubCell"/>
</dbReference>
<dbReference type="GO" id="GO:0030027">
    <property type="term" value="C:lamellipodium"/>
    <property type="evidence" value="ECO:0000250"/>
    <property type="project" value="UniProtKB"/>
</dbReference>
<dbReference type="GO" id="GO:0031258">
    <property type="term" value="C:lamellipodium membrane"/>
    <property type="evidence" value="ECO:0007669"/>
    <property type="project" value="UniProtKB-SubCell"/>
</dbReference>
<dbReference type="GO" id="GO:0016020">
    <property type="term" value="C:membrane"/>
    <property type="evidence" value="ECO:0007005"/>
    <property type="project" value="UniProtKB"/>
</dbReference>
<dbReference type="GO" id="GO:0031966">
    <property type="term" value="C:mitochondrial membrane"/>
    <property type="evidence" value="ECO:0007669"/>
    <property type="project" value="Ensembl"/>
</dbReference>
<dbReference type="GO" id="GO:0043025">
    <property type="term" value="C:neuronal cell body"/>
    <property type="evidence" value="ECO:0007669"/>
    <property type="project" value="Ensembl"/>
</dbReference>
<dbReference type="GO" id="GO:0016363">
    <property type="term" value="C:nuclear matrix"/>
    <property type="evidence" value="ECO:0007669"/>
    <property type="project" value="UniProtKB-SubCell"/>
</dbReference>
<dbReference type="GO" id="GO:0005634">
    <property type="term" value="C:nucleus"/>
    <property type="evidence" value="ECO:0000304"/>
    <property type="project" value="UniProtKB"/>
</dbReference>
<dbReference type="GO" id="GO:0099092">
    <property type="term" value="C:postsynaptic density, intracellular component"/>
    <property type="evidence" value="ECO:0007669"/>
    <property type="project" value="Ensembl"/>
</dbReference>
<dbReference type="GO" id="GO:0032587">
    <property type="term" value="C:ruffle membrane"/>
    <property type="evidence" value="ECO:0007669"/>
    <property type="project" value="UniProtKB-SubCell"/>
</dbReference>
<dbReference type="GO" id="GO:0097060">
    <property type="term" value="C:synaptic membrane"/>
    <property type="evidence" value="ECO:0007669"/>
    <property type="project" value="Ensembl"/>
</dbReference>
<dbReference type="GO" id="GO:0031982">
    <property type="term" value="C:vesicle"/>
    <property type="evidence" value="ECO:0007005"/>
    <property type="project" value="UniProtKB"/>
</dbReference>
<dbReference type="GO" id="GO:0051015">
    <property type="term" value="F:actin filament binding"/>
    <property type="evidence" value="ECO:0000314"/>
    <property type="project" value="UniProtKB"/>
</dbReference>
<dbReference type="GO" id="GO:1902936">
    <property type="term" value="F:phosphatidylinositol bisphosphate binding"/>
    <property type="evidence" value="ECO:0007669"/>
    <property type="project" value="Ensembl"/>
</dbReference>
<dbReference type="GO" id="GO:0019903">
    <property type="term" value="F:protein phosphatase binding"/>
    <property type="evidence" value="ECO:0007669"/>
    <property type="project" value="Ensembl"/>
</dbReference>
<dbReference type="GO" id="GO:0005102">
    <property type="term" value="F:signaling receptor binding"/>
    <property type="evidence" value="ECO:0007669"/>
    <property type="project" value="Ensembl"/>
</dbReference>
<dbReference type="GO" id="GO:0030036">
    <property type="term" value="P:actin cytoskeleton organization"/>
    <property type="evidence" value="ECO:0000304"/>
    <property type="project" value="ProtInc"/>
</dbReference>
<dbReference type="GO" id="GO:0030042">
    <property type="term" value="P:actin filament depolymerization"/>
    <property type="evidence" value="ECO:0000314"/>
    <property type="project" value="UniProtKB"/>
</dbReference>
<dbReference type="GO" id="GO:0030043">
    <property type="term" value="P:actin filament fragmentation"/>
    <property type="evidence" value="ECO:0000318"/>
    <property type="project" value="GO_Central"/>
</dbReference>
<dbReference type="GO" id="GO:0051014">
    <property type="term" value="P:actin filament severing"/>
    <property type="evidence" value="ECO:0000318"/>
    <property type="project" value="GO_Central"/>
</dbReference>
<dbReference type="GO" id="GO:0030030">
    <property type="term" value="P:cell projection organization"/>
    <property type="evidence" value="ECO:0007669"/>
    <property type="project" value="Ensembl"/>
</dbReference>
<dbReference type="GO" id="GO:0071364">
    <property type="term" value="P:cellular response to epidermal growth factor stimulus"/>
    <property type="evidence" value="ECO:0007669"/>
    <property type="project" value="Ensembl"/>
</dbReference>
<dbReference type="GO" id="GO:0071362">
    <property type="term" value="P:cellular response to ether"/>
    <property type="evidence" value="ECO:0007669"/>
    <property type="project" value="Ensembl"/>
</dbReference>
<dbReference type="GO" id="GO:0070301">
    <property type="term" value="P:cellular response to hydrogen peroxide"/>
    <property type="evidence" value="ECO:0007669"/>
    <property type="project" value="Ensembl"/>
</dbReference>
<dbReference type="GO" id="GO:1990314">
    <property type="term" value="P:cellular response to insulin-like growth factor stimulus"/>
    <property type="evidence" value="ECO:0007669"/>
    <property type="project" value="Ensembl"/>
</dbReference>
<dbReference type="GO" id="GO:0071347">
    <property type="term" value="P:cellular response to interleukin-1"/>
    <property type="evidence" value="ECO:0007669"/>
    <property type="project" value="Ensembl"/>
</dbReference>
<dbReference type="GO" id="GO:0071354">
    <property type="term" value="P:cellular response to interleukin-6"/>
    <property type="evidence" value="ECO:0007669"/>
    <property type="project" value="Ensembl"/>
</dbReference>
<dbReference type="GO" id="GO:0071356">
    <property type="term" value="P:cellular response to tumor necrosis factor"/>
    <property type="evidence" value="ECO:0007669"/>
    <property type="project" value="Ensembl"/>
</dbReference>
<dbReference type="GO" id="GO:0007010">
    <property type="term" value="P:cytoskeleton organization"/>
    <property type="evidence" value="ECO:0000315"/>
    <property type="project" value="UniProtKB"/>
</dbReference>
<dbReference type="GO" id="GO:0030010">
    <property type="term" value="P:establishment of cell polarity"/>
    <property type="evidence" value="ECO:0007669"/>
    <property type="project" value="Ensembl"/>
</dbReference>
<dbReference type="GO" id="GO:0051293">
    <property type="term" value="P:establishment of spindle localization"/>
    <property type="evidence" value="ECO:0000250"/>
    <property type="project" value="UniProtKB"/>
</dbReference>
<dbReference type="GO" id="GO:0021766">
    <property type="term" value="P:hippocampus development"/>
    <property type="evidence" value="ECO:0007669"/>
    <property type="project" value="Ensembl"/>
</dbReference>
<dbReference type="GO" id="GO:0000281">
    <property type="term" value="P:mitotic cytokinesis"/>
    <property type="evidence" value="ECO:0000318"/>
    <property type="project" value="GO_Central"/>
</dbReference>
<dbReference type="GO" id="GO:0098885">
    <property type="term" value="P:modification of postsynaptic actin cytoskeleton"/>
    <property type="evidence" value="ECO:0007669"/>
    <property type="project" value="Ensembl"/>
</dbReference>
<dbReference type="GO" id="GO:0032232">
    <property type="term" value="P:negative regulation of actin filament bundle assembly"/>
    <property type="evidence" value="ECO:0007669"/>
    <property type="project" value="Ensembl"/>
</dbReference>
<dbReference type="GO" id="GO:0030835">
    <property type="term" value="P:negative regulation of actin filament depolymerization"/>
    <property type="evidence" value="ECO:0007669"/>
    <property type="project" value="Ensembl"/>
</dbReference>
<dbReference type="GO" id="GO:0043066">
    <property type="term" value="P:negative regulation of apoptotic process"/>
    <property type="evidence" value="ECO:0000304"/>
    <property type="project" value="UniProtKB"/>
</dbReference>
<dbReference type="GO" id="GO:0007162">
    <property type="term" value="P:negative regulation of cell adhesion"/>
    <property type="evidence" value="ECO:0007669"/>
    <property type="project" value="Ensembl"/>
</dbReference>
<dbReference type="GO" id="GO:2000146">
    <property type="term" value="P:negative regulation of cell motility"/>
    <property type="evidence" value="ECO:0007669"/>
    <property type="project" value="Ensembl"/>
</dbReference>
<dbReference type="GO" id="GO:0045792">
    <property type="term" value="P:negative regulation of cell size"/>
    <property type="evidence" value="ECO:0007669"/>
    <property type="project" value="Ensembl"/>
</dbReference>
<dbReference type="GO" id="GO:1902951">
    <property type="term" value="P:negative regulation of dendritic spine maintenance"/>
    <property type="evidence" value="ECO:0007669"/>
    <property type="project" value="Ensembl"/>
</dbReference>
<dbReference type="GO" id="GO:0010593">
    <property type="term" value="P:negative regulation of lamellipodium assembly"/>
    <property type="evidence" value="ECO:0007669"/>
    <property type="project" value="Ensembl"/>
</dbReference>
<dbReference type="GO" id="GO:1905875">
    <property type="term" value="P:negative regulation of postsynaptic density organization"/>
    <property type="evidence" value="ECO:0007669"/>
    <property type="project" value="Ensembl"/>
</dbReference>
<dbReference type="GO" id="GO:0051511">
    <property type="term" value="P:negative regulation of unidimensional cell growth"/>
    <property type="evidence" value="ECO:0007669"/>
    <property type="project" value="Ensembl"/>
</dbReference>
<dbReference type="GO" id="GO:0001755">
    <property type="term" value="P:neural crest cell migration"/>
    <property type="evidence" value="ECO:0007669"/>
    <property type="project" value="Ensembl"/>
</dbReference>
<dbReference type="GO" id="GO:0001842">
    <property type="term" value="P:neural fold formation"/>
    <property type="evidence" value="ECO:0007669"/>
    <property type="project" value="Ensembl"/>
</dbReference>
<dbReference type="GO" id="GO:0044794">
    <property type="term" value="P:positive regulation by host of viral process"/>
    <property type="evidence" value="ECO:0000315"/>
    <property type="project" value="AgBase"/>
</dbReference>
<dbReference type="GO" id="GO:0030836">
    <property type="term" value="P:positive regulation of actin filament depolymerization"/>
    <property type="evidence" value="ECO:0007669"/>
    <property type="project" value="Ensembl"/>
</dbReference>
<dbReference type="GO" id="GO:2000814">
    <property type="term" value="P:positive regulation of barbed-end actin filament capping"/>
    <property type="evidence" value="ECO:0007669"/>
    <property type="project" value="Ensembl"/>
</dbReference>
<dbReference type="GO" id="GO:0030307">
    <property type="term" value="P:positive regulation of cell growth"/>
    <property type="evidence" value="ECO:0007669"/>
    <property type="project" value="Ensembl"/>
</dbReference>
<dbReference type="GO" id="GO:2000147">
    <property type="term" value="P:positive regulation of cell motility"/>
    <property type="evidence" value="ECO:0007669"/>
    <property type="project" value="Ensembl"/>
</dbReference>
<dbReference type="GO" id="GO:0060999">
    <property type="term" value="P:positive regulation of dendritic spine development"/>
    <property type="evidence" value="ECO:0007669"/>
    <property type="project" value="Ensembl"/>
</dbReference>
<dbReference type="GO" id="GO:0040019">
    <property type="term" value="P:positive regulation of embryonic development"/>
    <property type="evidence" value="ECO:0000250"/>
    <property type="project" value="UniProtKB"/>
</dbReference>
<dbReference type="GO" id="GO:2000784">
    <property type="term" value="P:positive regulation of establishment of cell polarity regulating cell shape"/>
    <property type="evidence" value="ECO:0007669"/>
    <property type="project" value="Ensembl"/>
</dbReference>
<dbReference type="GO" id="GO:0051894">
    <property type="term" value="P:positive regulation of focal adhesion assembly"/>
    <property type="evidence" value="ECO:0007669"/>
    <property type="project" value="Ensembl"/>
</dbReference>
<dbReference type="GO" id="GO:0010592">
    <property type="term" value="P:positive regulation of lamellipodium assembly"/>
    <property type="evidence" value="ECO:0007669"/>
    <property type="project" value="Ensembl"/>
</dbReference>
<dbReference type="GO" id="GO:1905873">
    <property type="term" value="P:positive regulation of protein localization to cell leading edge"/>
    <property type="evidence" value="ECO:0007669"/>
    <property type="project" value="Ensembl"/>
</dbReference>
<dbReference type="GO" id="GO:0045862">
    <property type="term" value="P:positive regulation of proteolysis"/>
    <property type="evidence" value="ECO:0007669"/>
    <property type="project" value="Ensembl"/>
</dbReference>
<dbReference type="GO" id="GO:0031915">
    <property type="term" value="P:positive regulation of synaptic plasticity"/>
    <property type="evidence" value="ECO:0007669"/>
    <property type="project" value="Ensembl"/>
</dbReference>
<dbReference type="GO" id="GO:0006606">
    <property type="term" value="P:protein import into nucleus"/>
    <property type="evidence" value="ECO:0007669"/>
    <property type="project" value="Ensembl"/>
</dbReference>
<dbReference type="GO" id="GO:0022604">
    <property type="term" value="P:regulation of cell morphogenesis"/>
    <property type="evidence" value="ECO:0000315"/>
    <property type="project" value="UniProtKB"/>
</dbReference>
<dbReference type="GO" id="GO:0061001">
    <property type="term" value="P:regulation of dendritic spine morphogenesis"/>
    <property type="evidence" value="ECO:0000315"/>
    <property type="project" value="ParkinsonsUK-UCL"/>
</dbReference>
<dbReference type="GO" id="GO:0014823">
    <property type="term" value="P:response to activity"/>
    <property type="evidence" value="ECO:0007669"/>
    <property type="project" value="Ensembl"/>
</dbReference>
<dbReference type="GO" id="GO:0043200">
    <property type="term" value="P:response to amino acid"/>
    <property type="evidence" value="ECO:0007669"/>
    <property type="project" value="Ensembl"/>
</dbReference>
<dbReference type="GO" id="GO:0009615">
    <property type="term" value="P:response to virus"/>
    <property type="evidence" value="ECO:0000270"/>
    <property type="project" value="UniProtKB"/>
</dbReference>
<dbReference type="GO" id="GO:0007266">
    <property type="term" value="P:Rho protein signal transduction"/>
    <property type="evidence" value="ECO:0000304"/>
    <property type="project" value="ProtInc"/>
</dbReference>
<dbReference type="CDD" id="cd11286">
    <property type="entry name" value="ADF_cofilin_like"/>
    <property type="match status" value="1"/>
</dbReference>
<dbReference type="FunFam" id="3.40.20.10:FF:000010">
    <property type="entry name" value="Putative destrin"/>
    <property type="match status" value="1"/>
</dbReference>
<dbReference type="Gene3D" id="3.40.20.10">
    <property type="entry name" value="Severin"/>
    <property type="match status" value="1"/>
</dbReference>
<dbReference type="IDEAL" id="IID00627"/>
<dbReference type="InterPro" id="IPR002108">
    <property type="entry name" value="ADF-H"/>
</dbReference>
<dbReference type="InterPro" id="IPR029006">
    <property type="entry name" value="ADF-H/Gelsolin-like_dom_sf"/>
</dbReference>
<dbReference type="InterPro" id="IPR017904">
    <property type="entry name" value="ADF/Cofilin"/>
</dbReference>
<dbReference type="PANTHER" id="PTHR11913">
    <property type="entry name" value="COFILIN-RELATED"/>
    <property type="match status" value="1"/>
</dbReference>
<dbReference type="Pfam" id="PF00241">
    <property type="entry name" value="Cofilin_ADF"/>
    <property type="match status" value="1"/>
</dbReference>
<dbReference type="PRINTS" id="PR00006">
    <property type="entry name" value="COFILIN"/>
</dbReference>
<dbReference type="SMART" id="SM00102">
    <property type="entry name" value="ADF"/>
    <property type="match status" value="1"/>
</dbReference>
<dbReference type="SUPFAM" id="SSF55753">
    <property type="entry name" value="Actin depolymerizing proteins"/>
    <property type="match status" value="1"/>
</dbReference>
<dbReference type="PROSITE" id="PS51263">
    <property type="entry name" value="ADF_H"/>
    <property type="match status" value="1"/>
</dbReference>
<feature type="initiator methionine" description="Removed" evidence="7 15 20 21 24 25 26 27 29">
    <location>
        <position position="1"/>
    </location>
</feature>
<feature type="chain" id="PRO_0000214898" description="Cofilin-1">
    <location>
        <begin position="2"/>
        <end position="166"/>
    </location>
</feature>
<feature type="domain" description="ADF-H" evidence="5">
    <location>
        <begin position="4"/>
        <end position="153"/>
    </location>
</feature>
<feature type="short sequence motif" description="Nuclear localization signal" evidence="4">
    <location>
        <begin position="30"/>
        <end position="34"/>
    </location>
</feature>
<feature type="modified residue" description="N-acetylalanine" evidence="14 15 20 21 24 25 26 27 29">
    <location>
        <position position="2"/>
    </location>
</feature>
<feature type="modified residue" description="Phosphoserine; by NRK" evidence="8 14 18 19 20 24 25 28">
    <location>
        <position position="3"/>
    </location>
</feature>
<feature type="modified residue" description="Phosphoserine" evidence="2">
    <location>
        <position position="8"/>
    </location>
</feature>
<feature type="modified residue" description="N6-acetyllysine" evidence="22">
    <location>
        <position position="13"/>
    </location>
</feature>
<feature type="modified residue" description="Phosphothreonine" evidence="24">
    <location>
        <position position="25"/>
    </location>
</feature>
<feature type="modified residue" description="Phosphoserine" evidence="28">
    <location>
        <position position="41"/>
    </location>
</feature>
<feature type="modified residue" description="Phosphothreonine" evidence="14">
    <location>
        <position position="63"/>
    </location>
</feature>
<feature type="modified residue" description="Phosphotyrosine" evidence="23">
    <location>
        <position position="68"/>
    </location>
</feature>
<feature type="modified residue" description="N6-acetyllysine" evidence="22">
    <location>
        <position position="73"/>
    </location>
</feature>
<feature type="modified residue" description="Phosphotyrosine" evidence="14">
    <location>
        <position position="82"/>
    </location>
</feature>
<feature type="modified residue" description="Phosphoserine" evidence="14">
    <location>
        <position position="108"/>
    </location>
</feature>
<feature type="modified residue" description="Phosphotyrosine" evidence="17">
    <location>
        <position position="140"/>
    </location>
</feature>
<feature type="modified residue" description="N6-acetyllysine" evidence="22">
    <location>
        <position position="144"/>
    </location>
</feature>
<feature type="modified residue" description="Phosphoserine" evidence="14 19 23 24 28">
    <location>
        <position position="156"/>
    </location>
</feature>
<feature type="cross-link" description="Glycyl lysine isopeptide (Lys-Gly) (interchain with G-Cter in SUMO2)" evidence="30">
    <location>
        <position position="132"/>
    </location>
</feature>
<feature type="helix" evidence="32">
    <location>
        <begin position="9"/>
        <end position="19"/>
    </location>
</feature>
<feature type="helix" evidence="32">
    <location>
        <begin position="26"/>
        <end position="31"/>
    </location>
</feature>
<feature type="strand" evidence="32">
    <location>
        <begin position="33"/>
        <end position="40"/>
    </location>
</feature>
<feature type="strand" evidence="32">
    <location>
        <begin position="44"/>
        <end position="56"/>
    </location>
</feature>
<feature type="helix" evidence="32">
    <location>
        <begin position="57"/>
        <end position="59"/>
    </location>
</feature>
<feature type="turn" evidence="32">
    <location>
        <begin position="61"/>
        <end position="63"/>
    </location>
</feature>
<feature type="helix" evidence="32">
    <location>
        <begin position="67"/>
        <end position="74"/>
    </location>
</feature>
<feature type="strand" evidence="31">
    <location>
        <begin position="77"/>
        <end position="79"/>
    </location>
</feature>
<feature type="strand" evidence="32">
    <location>
        <begin position="81"/>
        <end position="90"/>
    </location>
</feature>
<feature type="strand" evidence="32">
    <location>
        <begin position="95"/>
        <end position="104"/>
    </location>
</feature>
<feature type="helix" evidence="32">
    <location>
        <begin position="111"/>
        <end position="127"/>
    </location>
</feature>
<feature type="strand" evidence="32">
    <location>
        <begin position="134"/>
        <end position="139"/>
    </location>
</feature>
<feature type="helix" evidence="32">
    <location>
        <begin position="140"/>
        <end position="144"/>
    </location>
</feature>
<feature type="helix" evidence="32">
    <location>
        <begin position="147"/>
        <end position="154"/>
    </location>
</feature>
<feature type="helix" evidence="31">
    <location>
        <begin position="155"/>
        <end position="157"/>
    </location>
</feature>
<feature type="strand" evidence="32">
    <location>
        <begin position="160"/>
        <end position="165"/>
    </location>
</feature>
<comment type="function">
    <text evidence="2 6 9 11 12">Binds to F-actin and exhibits pH-sensitive F-actin depolymerizing activity (PubMed:11812157). In conjunction with the subcortical maternal complex (SCMC), plays an essential role for zygotes to progress beyond the first embryonic cell divisions via regulation of actin dynamics (PubMed:15580268). Required for the centralization of the mitotic spindle and symmetric division of zygotes (By similarity). Plays a role in the regulation of cell morphology and cytoskeletal organization in epithelial cells (PubMed:21834987). Required for the up-regulation of atypical chemokine receptor ACKR2 from endosomal compartment to cell membrane, increasing its efficiency in chemokine uptake and degradation (PubMed:23633677). Required for neural tube morphogenesis and neural crest cell migration (By similarity).</text>
</comment>
<comment type="subunit">
    <text evidence="1 2 6">Can bind G- and F-actin in a 1:1 ratio of cofilin to actin (PubMed:11812157). It is a major component of intranuclear and cytoplasmic actin rods (By similarity). Interacts with the subcortical maternal complex (SCMC) via interaction with TLE6 isoform 1 and NLRP5 (By similarity). Interacts with C9orf72 (By similarity).</text>
</comment>
<comment type="subunit">
    <text evidence="13">(Microbial infection) Interacts with human respiratory syncytial virus (HRSV) matrix protein; this interaction probably facilitates viral replication.</text>
</comment>
<comment type="interaction">
    <interactant intactId="EBI-352733">
        <id>P23528</id>
    </interactant>
    <interactant intactId="EBI-353944">
        <id>P60709</id>
        <label>ACTB</label>
    </interactant>
    <organismsDiffer>false</organismsDiffer>
    <experiments>11</experiments>
</comment>
<comment type="interaction">
    <interactant intactId="EBI-352733">
        <id>P23528</id>
    </interactant>
    <interactant intactId="EBI-352273">
        <id>P68032</id>
        <label>ACTC1</label>
    </interactant>
    <organismsDiffer>false</organismsDiffer>
    <experiments>2</experiments>
</comment>
<comment type="interaction">
    <interactant intactId="EBI-352733">
        <id>P23528</id>
    </interactant>
    <interactant intactId="EBI-351292">
        <id>P63261</id>
        <label>ACTG1</label>
    </interactant>
    <organismsDiffer>false</organismsDiffer>
    <experiments>10</experiments>
</comment>
<comment type="interaction">
    <interactant intactId="EBI-352733">
        <id>P23528</id>
    </interactant>
    <interactant intactId="EBI-930964">
        <id>P54253</id>
        <label>ATXN1</label>
    </interactant>
    <organismsDiffer>false</organismsDiffer>
    <experiments>11</experiments>
</comment>
<comment type="interaction">
    <interactant intactId="EBI-352733">
        <id>P23528</id>
    </interactant>
    <interactant intactId="EBI-10201319">
        <id>Q549N0</id>
        <label>CFL2</label>
    </interactant>
    <organismsDiffer>false</organismsDiffer>
    <experiments>3</experiments>
</comment>
<comment type="interaction">
    <interactant intactId="EBI-352733">
        <id>P23528</id>
    </interactant>
    <interactant intactId="EBI-351218">
        <id>Q9Y281</id>
        <label>CFL2</label>
    </interactant>
    <organismsDiffer>false</organismsDiffer>
    <experiments>3</experiments>
</comment>
<comment type="interaction">
    <interactant intactId="EBI-352733">
        <id>P23528</id>
    </interactant>
    <interactant intactId="EBI-297353">
        <id>P00533</id>
        <label>EGFR</label>
    </interactant>
    <organismsDiffer>false</organismsDiffer>
    <experiments>3</experiments>
</comment>
<comment type="interaction">
    <interactant intactId="EBI-352733">
        <id>P23528</id>
    </interactant>
    <interactant intactId="EBI-3959804">
        <id>P57058</id>
        <label>HUNK</label>
    </interactant>
    <organismsDiffer>false</organismsDiffer>
    <experiments>2</experiments>
</comment>
<comment type="interaction">
    <interactant intactId="EBI-352733">
        <id>P23528</id>
    </interactant>
    <interactant intactId="EBI-444403">
        <id>P53667</id>
        <label>LIMK1</label>
    </interactant>
    <organismsDiffer>false</organismsDiffer>
    <experiments>3</experiments>
</comment>
<comment type="interaction">
    <interactant intactId="EBI-352733">
        <id>P23528</id>
    </interactant>
    <interactant intactId="EBI-748974">
        <id>Q96CV9</id>
        <label>OPTN</label>
    </interactant>
    <organismsDiffer>false</organismsDiffer>
    <experiments>3</experiments>
</comment>
<comment type="interaction">
    <interactant intactId="EBI-352733">
        <id>P23528</id>
    </interactant>
    <interactant intactId="EBI-2827556">
        <id>Q13393</id>
        <label>PLD1</label>
    </interactant>
    <organismsDiffer>false</organismsDiffer>
    <experiments>4</experiments>
</comment>
<comment type="interaction">
    <interactant intactId="EBI-352733">
        <id>P23528</id>
    </interactant>
    <interactant intactId="EBI-1053996">
        <id>O14939</id>
        <label>PLD2</label>
    </interactant>
    <organismsDiffer>false</organismsDiffer>
    <experiments>2</experiments>
</comment>
<comment type="interaction">
    <interactant intactId="EBI-352733">
        <id>P23528</id>
    </interactant>
    <interactant intactId="EBI-9978131">
        <id>Q1KLZ0</id>
        <label>PS1TP5BP1</label>
    </interactant>
    <organismsDiffer>false</organismsDiffer>
    <experiments>3</experiments>
</comment>
<comment type="interaction">
    <interactant intactId="EBI-352733">
        <id>P23528</id>
    </interactant>
    <interactant intactId="EBI-1222387">
        <id>Q8WYL5</id>
        <label>SSH1</label>
    </interactant>
    <organismsDiffer>false</organismsDiffer>
    <experiments>2</experiments>
</comment>
<comment type="interaction">
    <interactant intactId="EBI-352733">
        <id>P23528</id>
    </interactant>
    <interactant intactId="EBI-347088">
        <id>P63104</id>
        <label>YWHAZ</label>
    </interactant>
    <organismsDiffer>false</organismsDiffer>
    <experiments>3</experiments>
</comment>
<comment type="interaction">
    <interactant intactId="EBI-352733">
        <id>P23528</id>
    </interactant>
    <interactant intactId="EBI-10042882">
        <id>P0DOE7</id>
        <label>M</label>
    </interactant>
    <organismsDiffer>true</organismsDiffer>
    <experiments>2</experiments>
</comment>
<comment type="subcellular location">
    <subcellularLocation>
        <location evidence="9">Nucleus matrix</location>
    </subcellularLocation>
    <subcellularLocation>
        <location evidence="9">Cytoplasm</location>
        <location evidence="9">Cytoskeleton</location>
    </subcellularLocation>
    <subcellularLocation>
        <location evidence="9">Cell projection</location>
        <location evidence="9">Ruffle membrane</location>
        <topology evidence="9">Peripheral membrane protein</topology>
        <orientation evidence="9">Cytoplasmic side</orientation>
    </subcellularLocation>
    <subcellularLocation>
        <location evidence="9">Cell projection</location>
        <location evidence="9">Lamellipodium membrane</location>
        <topology evidence="9">Peripheral membrane protein</topology>
        <orientation evidence="9">Cytoplasmic side</orientation>
    </subcellularLocation>
    <subcellularLocation>
        <location evidence="2">Cell projection</location>
        <location evidence="2">Lamellipodium</location>
    </subcellularLocation>
    <subcellularLocation>
        <location evidence="2">Cell projection</location>
        <location evidence="2">Growth cone</location>
    </subcellularLocation>
    <subcellularLocation>
        <location evidence="2">Cell projection</location>
        <location evidence="2">Axon</location>
    </subcellularLocation>
    <text>Colocalizes with the actin cytoskeleton in membrane ruffles and lamellipodia. Detected at the cleavage furrow and contractile ring during cytokinesis. Almost completely in nucleus in cells exposed to heat shock or 10% dimethyl sulfoxide.</text>
</comment>
<comment type="tissue specificity">
    <text>Widely distributed in various tissues.</text>
</comment>
<comment type="induction">
    <text evidence="10">Up-regulated in response to enterovirus 71 (EV71) infection (at protein level).</text>
</comment>
<comment type="PTM">
    <text evidence="3 8 12">Inactivated by phosphorylation on Ser-3. Phosphorylated on Ser-3 in resting cells (By similarity). Dephosphorylated by PDXP/chronophin; this restores its activity in promoting actin filament depolymerization. The phosphorylation of Ser-24 may prevent recognition of the nuclear localization signal (By similarity). Phosphorylated via a ARRB1-RAC1-LIMK1-PAK1 cascade upon active ligand stimulation of atypical chemokine receptor ACKR2.</text>
</comment>
<comment type="similarity">
    <text evidence="16">Belongs to the actin-binding proteins ADF family.</text>
</comment>
<comment type="online information" name="Wikipedia">
    <link uri="https://en.wikipedia.org/wiki/Cofilin"/>
    <text>Cofilin entry</text>
</comment>
<accession>P23528</accession>
<accession>B3KUQ1</accession>
<accession>Q53Y87</accession>
<accession>Q9UCA2</accession>
<evidence type="ECO:0000250" key="1">
    <source>
        <dbReference type="UniProtKB" id="P10668"/>
    </source>
</evidence>
<evidence type="ECO:0000250" key="2">
    <source>
        <dbReference type="UniProtKB" id="P18760"/>
    </source>
</evidence>
<evidence type="ECO:0000250" key="3">
    <source>
        <dbReference type="UniProtKB" id="P45695"/>
    </source>
</evidence>
<evidence type="ECO:0000255" key="4"/>
<evidence type="ECO:0000255" key="5">
    <source>
        <dbReference type="PROSITE-ProRule" id="PRU00599"/>
    </source>
</evidence>
<evidence type="ECO:0000269" key="6">
    <source>
    </source>
</evidence>
<evidence type="ECO:0000269" key="7">
    <source>
    </source>
</evidence>
<evidence type="ECO:0000269" key="8">
    <source>
    </source>
</evidence>
<evidence type="ECO:0000269" key="9">
    <source>
    </source>
</evidence>
<evidence type="ECO:0000269" key="10">
    <source>
    </source>
</evidence>
<evidence type="ECO:0000269" key="11">
    <source>
    </source>
</evidence>
<evidence type="ECO:0000269" key="12">
    <source>
    </source>
</evidence>
<evidence type="ECO:0000269" key="13">
    <source>
    </source>
</evidence>
<evidence type="ECO:0000269" key="14">
    <source>
    </source>
</evidence>
<evidence type="ECO:0000269" key="15">
    <source ref="9"/>
</evidence>
<evidence type="ECO:0000305" key="16"/>
<evidence type="ECO:0007744" key="17">
    <source>
    </source>
</evidence>
<evidence type="ECO:0007744" key="18">
    <source>
    </source>
</evidence>
<evidence type="ECO:0007744" key="19">
    <source>
    </source>
</evidence>
<evidence type="ECO:0007744" key="20">
    <source>
    </source>
</evidence>
<evidence type="ECO:0007744" key="21">
    <source>
    </source>
</evidence>
<evidence type="ECO:0007744" key="22">
    <source>
    </source>
</evidence>
<evidence type="ECO:0007744" key="23">
    <source>
    </source>
</evidence>
<evidence type="ECO:0007744" key="24">
    <source>
    </source>
</evidence>
<evidence type="ECO:0007744" key="25">
    <source>
    </source>
</evidence>
<evidence type="ECO:0007744" key="26">
    <source>
    </source>
</evidence>
<evidence type="ECO:0007744" key="27">
    <source>
    </source>
</evidence>
<evidence type="ECO:0007744" key="28">
    <source>
    </source>
</evidence>
<evidence type="ECO:0007744" key="29">
    <source>
    </source>
</evidence>
<evidence type="ECO:0007744" key="30">
    <source>
    </source>
</evidence>
<evidence type="ECO:0007829" key="31">
    <source>
        <dbReference type="PDB" id="4BEX"/>
    </source>
</evidence>
<evidence type="ECO:0007829" key="32">
    <source>
        <dbReference type="PDB" id="5L6W"/>
    </source>
</evidence>
<protein>
    <recommendedName>
        <fullName>Cofilin-1</fullName>
    </recommendedName>
    <alternativeName>
        <fullName>18 kDa phosphoprotein</fullName>
        <shortName>p18</shortName>
    </alternativeName>
    <alternativeName>
        <fullName>Cofilin, non-muscle isoform</fullName>
    </alternativeName>
</protein>